<organism>
    <name type="scientific">Bordetella pertussis (strain Tohama I / ATCC BAA-589 / NCTC 13251)</name>
    <dbReference type="NCBI Taxonomy" id="257313"/>
    <lineage>
        <taxon>Bacteria</taxon>
        <taxon>Pseudomonadati</taxon>
        <taxon>Pseudomonadota</taxon>
        <taxon>Betaproteobacteria</taxon>
        <taxon>Burkholderiales</taxon>
        <taxon>Alcaligenaceae</taxon>
        <taxon>Bordetella</taxon>
    </lineage>
</organism>
<sequence>MTRISRSAYAEIYGPTVVGGVGDRVRLADTLLLAEVEKDHTIFGEEVKFGGGKVIRDGMGQSQRLATDCVDTVITNALIIDAVTGIVKADIGIKDGLISGIGKAGNPDTQPGVTIIIGASTEVVAGEGLIVTAGAIDTHIHFICPQQIEEALATGTTTMIGGGTGPATGSLATTSTSGPWHMAAMLQALDAFPVNVGLFGKGSSSSHGALLEQVRAGAMGLKIHEDWASTPASIDTCLNVAEETDIQVAIHSDTLNESGFVEDTFAAFKGRTIHSFHTEGAGGGHAPDIIRAAGMPNVLPASTNPTMPFTRNTIDEHLDMVMVCHHLDPSIAEDLAFAESRIRRETIAAEDILHDLGAFSIMSSDSQAMGRVGEIVLRTWQTAHKMKLQRGPLQGDSERSDNERIKRYIAKYTINPAVAHGIAHLVGSVEVGKLADLVLWKPAFFGVKVNMVLKSGMAVSASIGDMGASISTPQPVQIRPMWGSHGKALRTSVAFVSQVSLSNPAVSELGLNKRLEAVRGCRGVTKHDMVRNNWLPAISVDPQTYQVYADGQLLRCEALAELPMAQRYFLF</sequence>
<accession>Q7VUD3</accession>
<dbReference type="EC" id="3.5.1.5" evidence="1"/>
<dbReference type="EMBL" id="BX640420">
    <property type="protein sequence ID" value="CAE43436.1"/>
    <property type="molecule type" value="Genomic_DNA"/>
</dbReference>
<dbReference type="RefSeq" id="NP_881730.1">
    <property type="nucleotide sequence ID" value="NC_002929.2"/>
</dbReference>
<dbReference type="RefSeq" id="WP_010931337.1">
    <property type="nucleotide sequence ID" value="NZ_CP039022.1"/>
</dbReference>
<dbReference type="SMR" id="Q7VUD3"/>
<dbReference type="STRING" id="257313.BP3168"/>
<dbReference type="MEROPS" id="M38.982"/>
<dbReference type="PaxDb" id="257313-BP3168"/>
<dbReference type="GeneID" id="69603096"/>
<dbReference type="KEGG" id="bpe:BP3168"/>
<dbReference type="PATRIC" id="fig|257313.5.peg.3425"/>
<dbReference type="eggNOG" id="COG0804">
    <property type="taxonomic scope" value="Bacteria"/>
</dbReference>
<dbReference type="HOGENOM" id="CLU_000980_0_0_4"/>
<dbReference type="UniPathway" id="UPA00258">
    <property type="reaction ID" value="UER00370"/>
</dbReference>
<dbReference type="Proteomes" id="UP000002676">
    <property type="component" value="Chromosome"/>
</dbReference>
<dbReference type="GO" id="GO:0005737">
    <property type="term" value="C:cytoplasm"/>
    <property type="evidence" value="ECO:0007669"/>
    <property type="project" value="UniProtKB-SubCell"/>
</dbReference>
<dbReference type="GO" id="GO:0016151">
    <property type="term" value="F:nickel cation binding"/>
    <property type="evidence" value="ECO:0007669"/>
    <property type="project" value="UniProtKB-UniRule"/>
</dbReference>
<dbReference type="GO" id="GO:0009039">
    <property type="term" value="F:urease activity"/>
    <property type="evidence" value="ECO:0007669"/>
    <property type="project" value="UniProtKB-UniRule"/>
</dbReference>
<dbReference type="GO" id="GO:0043419">
    <property type="term" value="P:urea catabolic process"/>
    <property type="evidence" value="ECO:0007669"/>
    <property type="project" value="UniProtKB-UniRule"/>
</dbReference>
<dbReference type="CDD" id="cd00375">
    <property type="entry name" value="Urease_alpha"/>
    <property type="match status" value="1"/>
</dbReference>
<dbReference type="Gene3D" id="3.20.20.140">
    <property type="entry name" value="Metal-dependent hydrolases"/>
    <property type="match status" value="1"/>
</dbReference>
<dbReference type="Gene3D" id="2.30.40.10">
    <property type="entry name" value="Urease, subunit C, domain 1"/>
    <property type="match status" value="1"/>
</dbReference>
<dbReference type="HAMAP" id="MF_01953">
    <property type="entry name" value="Urease_alpha"/>
    <property type="match status" value="1"/>
</dbReference>
<dbReference type="InterPro" id="IPR006680">
    <property type="entry name" value="Amidohydro-rel"/>
</dbReference>
<dbReference type="InterPro" id="IPR011059">
    <property type="entry name" value="Metal-dep_hydrolase_composite"/>
</dbReference>
<dbReference type="InterPro" id="IPR032466">
    <property type="entry name" value="Metal_Hydrolase"/>
</dbReference>
<dbReference type="InterPro" id="IPR011612">
    <property type="entry name" value="Urease_alpha_N_dom"/>
</dbReference>
<dbReference type="InterPro" id="IPR050112">
    <property type="entry name" value="Urease_alpha_subunit"/>
</dbReference>
<dbReference type="InterPro" id="IPR017950">
    <property type="entry name" value="Urease_AS"/>
</dbReference>
<dbReference type="InterPro" id="IPR005848">
    <property type="entry name" value="Urease_asu"/>
</dbReference>
<dbReference type="InterPro" id="IPR017951">
    <property type="entry name" value="Urease_asu_c"/>
</dbReference>
<dbReference type="InterPro" id="IPR029754">
    <property type="entry name" value="Urease_Ni-bd"/>
</dbReference>
<dbReference type="NCBIfam" id="NF009686">
    <property type="entry name" value="PRK13207.1"/>
    <property type="match status" value="1"/>
</dbReference>
<dbReference type="NCBIfam" id="TIGR01792">
    <property type="entry name" value="urease_alph"/>
    <property type="match status" value="1"/>
</dbReference>
<dbReference type="PANTHER" id="PTHR43440">
    <property type="entry name" value="UREASE"/>
    <property type="match status" value="1"/>
</dbReference>
<dbReference type="PANTHER" id="PTHR43440:SF1">
    <property type="entry name" value="UREASE"/>
    <property type="match status" value="1"/>
</dbReference>
<dbReference type="Pfam" id="PF01979">
    <property type="entry name" value="Amidohydro_1"/>
    <property type="match status" value="1"/>
</dbReference>
<dbReference type="Pfam" id="PF00449">
    <property type="entry name" value="Urease_alpha"/>
    <property type="match status" value="1"/>
</dbReference>
<dbReference type="PRINTS" id="PR01752">
    <property type="entry name" value="UREASE"/>
</dbReference>
<dbReference type="SUPFAM" id="SSF51338">
    <property type="entry name" value="Composite domain of metallo-dependent hydrolases"/>
    <property type="match status" value="1"/>
</dbReference>
<dbReference type="SUPFAM" id="SSF51556">
    <property type="entry name" value="Metallo-dependent hydrolases"/>
    <property type="match status" value="1"/>
</dbReference>
<dbReference type="PROSITE" id="PS01120">
    <property type="entry name" value="UREASE_1"/>
    <property type="match status" value="1"/>
</dbReference>
<dbReference type="PROSITE" id="PS00145">
    <property type="entry name" value="UREASE_2"/>
    <property type="match status" value="1"/>
</dbReference>
<dbReference type="PROSITE" id="PS51368">
    <property type="entry name" value="UREASE_3"/>
    <property type="match status" value="1"/>
</dbReference>
<proteinExistence type="inferred from homology"/>
<protein>
    <recommendedName>
        <fullName evidence="1">Urease subunit alpha</fullName>
        <ecNumber evidence="1">3.5.1.5</ecNumber>
    </recommendedName>
    <alternativeName>
        <fullName evidence="1">Urea amidohydrolase subunit alpha</fullName>
    </alternativeName>
</protein>
<evidence type="ECO:0000255" key="1">
    <source>
        <dbReference type="HAMAP-Rule" id="MF_01953"/>
    </source>
</evidence>
<comment type="catalytic activity">
    <reaction evidence="1">
        <text>urea + 2 H2O + H(+) = hydrogencarbonate + 2 NH4(+)</text>
        <dbReference type="Rhea" id="RHEA:20557"/>
        <dbReference type="ChEBI" id="CHEBI:15377"/>
        <dbReference type="ChEBI" id="CHEBI:15378"/>
        <dbReference type="ChEBI" id="CHEBI:16199"/>
        <dbReference type="ChEBI" id="CHEBI:17544"/>
        <dbReference type="ChEBI" id="CHEBI:28938"/>
        <dbReference type="EC" id="3.5.1.5"/>
    </reaction>
</comment>
<comment type="cofactor">
    <cofactor evidence="1">
        <name>Ni cation</name>
        <dbReference type="ChEBI" id="CHEBI:25516"/>
    </cofactor>
    <text evidence="1">Binds 2 nickel ions per subunit.</text>
</comment>
<comment type="pathway">
    <text evidence="1">Nitrogen metabolism; urea degradation; CO(2) and NH(3) from urea (urease route): step 1/1.</text>
</comment>
<comment type="subunit">
    <text evidence="1">Heterotrimer of UreA (gamma), UreB (beta) and UreC (alpha) subunits. Three heterotrimers associate to form the active enzyme.</text>
</comment>
<comment type="subcellular location">
    <subcellularLocation>
        <location evidence="1">Cytoplasm</location>
    </subcellularLocation>
</comment>
<comment type="PTM">
    <text evidence="1">Carboxylation allows a single lysine to coordinate two nickel ions.</text>
</comment>
<comment type="similarity">
    <text evidence="1">Belongs to the metallo-dependent hydrolases superfamily. Urease alpha subunit family.</text>
</comment>
<feature type="chain" id="PRO_0000234137" description="Urease subunit alpha">
    <location>
        <begin position="1"/>
        <end position="571"/>
    </location>
</feature>
<feature type="domain" description="Urease" evidence="1">
    <location>
        <begin position="134"/>
        <end position="571"/>
    </location>
</feature>
<feature type="active site" description="Proton donor" evidence="1">
    <location>
        <position position="325"/>
    </location>
</feature>
<feature type="binding site" evidence="1">
    <location>
        <position position="139"/>
    </location>
    <ligand>
        <name>Ni(2+)</name>
        <dbReference type="ChEBI" id="CHEBI:49786"/>
        <label>1</label>
    </ligand>
</feature>
<feature type="binding site" evidence="1">
    <location>
        <position position="141"/>
    </location>
    <ligand>
        <name>Ni(2+)</name>
        <dbReference type="ChEBI" id="CHEBI:49786"/>
        <label>1</label>
    </ligand>
</feature>
<feature type="binding site" description="via carbamate group" evidence="1">
    <location>
        <position position="222"/>
    </location>
    <ligand>
        <name>Ni(2+)</name>
        <dbReference type="ChEBI" id="CHEBI:49786"/>
        <label>1</label>
    </ligand>
</feature>
<feature type="binding site" description="via carbamate group" evidence="1">
    <location>
        <position position="222"/>
    </location>
    <ligand>
        <name>Ni(2+)</name>
        <dbReference type="ChEBI" id="CHEBI:49786"/>
        <label>2</label>
    </ligand>
</feature>
<feature type="binding site" evidence="1">
    <location>
        <position position="224"/>
    </location>
    <ligand>
        <name>substrate</name>
    </ligand>
</feature>
<feature type="binding site" evidence="1">
    <location>
        <position position="251"/>
    </location>
    <ligand>
        <name>Ni(2+)</name>
        <dbReference type="ChEBI" id="CHEBI:49786"/>
        <label>2</label>
    </ligand>
</feature>
<feature type="binding site" evidence="1">
    <location>
        <position position="277"/>
    </location>
    <ligand>
        <name>Ni(2+)</name>
        <dbReference type="ChEBI" id="CHEBI:49786"/>
        <label>2</label>
    </ligand>
</feature>
<feature type="binding site" evidence="1">
    <location>
        <position position="365"/>
    </location>
    <ligand>
        <name>Ni(2+)</name>
        <dbReference type="ChEBI" id="CHEBI:49786"/>
        <label>1</label>
    </ligand>
</feature>
<feature type="modified residue" description="N6-carboxylysine" evidence="1">
    <location>
        <position position="222"/>
    </location>
</feature>
<gene>
    <name evidence="1" type="primary">ureC</name>
    <name type="ordered locus">BP3168</name>
</gene>
<keyword id="KW-0963">Cytoplasm</keyword>
<keyword id="KW-0378">Hydrolase</keyword>
<keyword id="KW-0479">Metal-binding</keyword>
<keyword id="KW-0533">Nickel</keyword>
<keyword id="KW-1185">Reference proteome</keyword>
<reference key="1">
    <citation type="journal article" date="2003" name="Nat. Genet.">
        <title>Comparative analysis of the genome sequences of Bordetella pertussis, Bordetella parapertussis and Bordetella bronchiseptica.</title>
        <authorList>
            <person name="Parkhill J."/>
            <person name="Sebaihia M."/>
            <person name="Preston A."/>
            <person name="Murphy L.D."/>
            <person name="Thomson N.R."/>
            <person name="Harris D.E."/>
            <person name="Holden M.T.G."/>
            <person name="Churcher C.M."/>
            <person name="Bentley S.D."/>
            <person name="Mungall K.L."/>
            <person name="Cerdeno-Tarraga A.-M."/>
            <person name="Temple L."/>
            <person name="James K.D."/>
            <person name="Harris B."/>
            <person name="Quail M.A."/>
            <person name="Achtman M."/>
            <person name="Atkin R."/>
            <person name="Baker S."/>
            <person name="Basham D."/>
            <person name="Bason N."/>
            <person name="Cherevach I."/>
            <person name="Chillingworth T."/>
            <person name="Collins M."/>
            <person name="Cronin A."/>
            <person name="Davis P."/>
            <person name="Doggett J."/>
            <person name="Feltwell T."/>
            <person name="Goble A."/>
            <person name="Hamlin N."/>
            <person name="Hauser H."/>
            <person name="Holroyd S."/>
            <person name="Jagels K."/>
            <person name="Leather S."/>
            <person name="Moule S."/>
            <person name="Norberczak H."/>
            <person name="O'Neil S."/>
            <person name="Ormond D."/>
            <person name="Price C."/>
            <person name="Rabbinowitsch E."/>
            <person name="Rutter S."/>
            <person name="Sanders M."/>
            <person name="Saunders D."/>
            <person name="Seeger K."/>
            <person name="Sharp S."/>
            <person name="Simmonds M."/>
            <person name="Skelton J."/>
            <person name="Squares R."/>
            <person name="Squares S."/>
            <person name="Stevens K."/>
            <person name="Unwin L."/>
            <person name="Whitehead S."/>
            <person name="Barrell B.G."/>
            <person name="Maskell D.J."/>
        </authorList>
    </citation>
    <scope>NUCLEOTIDE SEQUENCE [LARGE SCALE GENOMIC DNA]</scope>
    <source>
        <strain>Tohama I / ATCC BAA-589 / NCTC 13251</strain>
    </source>
</reference>
<name>URE1_BORPE</name>